<organism>
    <name type="scientific">Ureaplasma parvum serovar 3 (strain ATCC 27815 / 27 / NCTC 11736)</name>
    <dbReference type="NCBI Taxonomy" id="505682"/>
    <lineage>
        <taxon>Bacteria</taxon>
        <taxon>Bacillati</taxon>
        <taxon>Mycoplasmatota</taxon>
        <taxon>Mycoplasmoidales</taxon>
        <taxon>Mycoplasmoidaceae</taxon>
        <taxon>Ureaplasma</taxon>
    </lineage>
</organism>
<proteinExistence type="inferred from homology"/>
<dbReference type="EMBL" id="CP000942">
    <property type="protein sequence ID" value="ACA32691.1"/>
    <property type="molecule type" value="Genomic_DNA"/>
</dbReference>
<dbReference type="RefSeq" id="WP_010891651.1">
    <property type="nucleotide sequence ID" value="NC_010503.1"/>
</dbReference>
<dbReference type="SMR" id="B1AI12"/>
<dbReference type="GeneID" id="29672142"/>
<dbReference type="KEGG" id="upa:UPA3_0026"/>
<dbReference type="HOGENOM" id="CLU_040318_0_0_14"/>
<dbReference type="Proteomes" id="UP000002162">
    <property type="component" value="Chromosome"/>
</dbReference>
<dbReference type="GO" id="GO:0022627">
    <property type="term" value="C:cytosolic small ribosomal subunit"/>
    <property type="evidence" value="ECO:0007669"/>
    <property type="project" value="TreeGrafter"/>
</dbReference>
<dbReference type="GO" id="GO:0003735">
    <property type="term" value="F:structural constituent of ribosome"/>
    <property type="evidence" value="ECO:0007669"/>
    <property type="project" value="InterPro"/>
</dbReference>
<dbReference type="GO" id="GO:0006412">
    <property type="term" value="P:translation"/>
    <property type="evidence" value="ECO:0007669"/>
    <property type="project" value="UniProtKB-UniRule"/>
</dbReference>
<dbReference type="CDD" id="cd01425">
    <property type="entry name" value="RPS2"/>
    <property type="match status" value="1"/>
</dbReference>
<dbReference type="Gene3D" id="3.40.50.10490">
    <property type="entry name" value="Glucose-6-phosphate isomerase like protein, domain 1"/>
    <property type="match status" value="1"/>
</dbReference>
<dbReference type="Gene3D" id="1.10.287.610">
    <property type="entry name" value="Helix hairpin bin"/>
    <property type="match status" value="1"/>
</dbReference>
<dbReference type="HAMAP" id="MF_00291_B">
    <property type="entry name" value="Ribosomal_uS2_B"/>
    <property type="match status" value="1"/>
</dbReference>
<dbReference type="InterPro" id="IPR001865">
    <property type="entry name" value="Ribosomal_uS2"/>
</dbReference>
<dbReference type="InterPro" id="IPR005706">
    <property type="entry name" value="Ribosomal_uS2_bac/mit/plastid"/>
</dbReference>
<dbReference type="InterPro" id="IPR018130">
    <property type="entry name" value="Ribosomal_uS2_CS"/>
</dbReference>
<dbReference type="InterPro" id="IPR023591">
    <property type="entry name" value="Ribosomal_uS2_flav_dom_sf"/>
</dbReference>
<dbReference type="NCBIfam" id="TIGR01011">
    <property type="entry name" value="rpsB_bact"/>
    <property type="match status" value="1"/>
</dbReference>
<dbReference type="PANTHER" id="PTHR12534">
    <property type="entry name" value="30S RIBOSOMAL PROTEIN S2 PROKARYOTIC AND ORGANELLAR"/>
    <property type="match status" value="1"/>
</dbReference>
<dbReference type="PANTHER" id="PTHR12534:SF0">
    <property type="entry name" value="SMALL RIBOSOMAL SUBUNIT PROTEIN US2M"/>
    <property type="match status" value="1"/>
</dbReference>
<dbReference type="Pfam" id="PF00318">
    <property type="entry name" value="Ribosomal_S2"/>
    <property type="match status" value="1"/>
</dbReference>
<dbReference type="PRINTS" id="PR00395">
    <property type="entry name" value="RIBOSOMALS2"/>
</dbReference>
<dbReference type="SUPFAM" id="SSF52313">
    <property type="entry name" value="Ribosomal protein S2"/>
    <property type="match status" value="1"/>
</dbReference>
<dbReference type="PROSITE" id="PS00963">
    <property type="entry name" value="RIBOSOMAL_S2_2"/>
    <property type="match status" value="1"/>
</dbReference>
<feature type="chain" id="PRO_0000352048" description="Small ribosomal subunit protein uS2">
    <location>
        <begin position="1"/>
        <end position="349"/>
    </location>
</feature>
<feature type="region of interest" description="Disordered" evidence="2">
    <location>
        <begin position="302"/>
        <end position="334"/>
    </location>
</feature>
<sequence>MSQMENSTKKVESVANVEVVTTENAKVEQKPTSPADAIQLKVNANSTIKNLKTLVSIVKLTESGAHIGLNPKKWNPKMASYIHAKRSNNHVIDILKTILFLDRAYKFLQEVSQNGGTVMFVGTRGRVVKELIKAEAERTNSFYVTQRWLGGTLTNFTNISRSLKKFNSNLALLESEEINKYSKKEQIAINKETAKLEKFYGGIKNMKQRPDVLILVDPVNDVNAIKEARKLNIPVIALANTNADPQLIDYIIPVNNYSVKSITLILGVLADSIAELHGEPTKIVGRPDSEIVLPETKSNWKQNNYDPSKRGYNPKYVNHKSTFNKFNNKKPVDSTTNEIKTNVIKAETK</sequence>
<comment type="similarity">
    <text evidence="1">Belongs to the universal ribosomal protein uS2 family.</text>
</comment>
<evidence type="ECO:0000255" key="1">
    <source>
        <dbReference type="HAMAP-Rule" id="MF_00291"/>
    </source>
</evidence>
<evidence type="ECO:0000256" key="2">
    <source>
        <dbReference type="SAM" id="MobiDB-lite"/>
    </source>
</evidence>
<evidence type="ECO:0000305" key="3"/>
<keyword id="KW-0687">Ribonucleoprotein</keyword>
<keyword id="KW-0689">Ribosomal protein</keyword>
<accession>B1AI12</accession>
<protein>
    <recommendedName>
        <fullName evidence="1">Small ribosomal subunit protein uS2</fullName>
    </recommendedName>
    <alternativeName>
        <fullName evidence="3">30S ribosomal protein S2</fullName>
    </alternativeName>
</protein>
<gene>
    <name evidence="1" type="primary">rpsB</name>
    <name type="ordered locus">UPA3_0026</name>
</gene>
<name>RS2_UREP2</name>
<reference key="1">
    <citation type="submission" date="2008-02" db="EMBL/GenBank/DDBJ databases">
        <title>Genome sequence of Ureaplasma parvum serovar 3.</title>
        <authorList>
            <person name="Methe B.A."/>
            <person name="Glass J."/>
            <person name="Waites K."/>
            <person name="Shrivastava S."/>
        </authorList>
    </citation>
    <scope>NUCLEOTIDE SEQUENCE [LARGE SCALE GENOMIC DNA]</scope>
    <source>
        <strain>ATCC 27815 / 27 / NCTC 11736</strain>
    </source>
</reference>